<dbReference type="EC" id="2.7.7.23" evidence="1"/>
<dbReference type="EC" id="2.3.1.157" evidence="1"/>
<dbReference type="EMBL" id="AE000657">
    <property type="protein sequence ID" value="AAC06824.1"/>
    <property type="molecule type" value="Genomic_DNA"/>
</dbReference>
<dbReference type="PIR" id="C70354">
    <property type="entry name" value="C70354"/>
</dbReference>
<dbReference type="RefSeq" id="NP_213423.1">
    <property type="nucleotide sequence ID" value="NC_000918.1"/>
</dbReference>
<dbReference type="RefSeq" id="WP_010880361.1">
    <property type="nucleotide sequence ID" value="NC_000918.1"/>
</dbReference>
<dbReference type="SMR" id="O66863"/>
<dbReference type="FunCoup" id="O66863">
    <property type="interactions" value="403"/>
</dbReference>
<dbReference type="STRING" id="224324.aq_607"/>
<dbReference type="EnsemblBacteria" id="AAC06824">
    <property type="protein sequence ID" value="AAC06824"/>
    <property type="gene ID" value="aq_607"/>
</dbReference>
<dbReference type="KEGG" id="aae:aq_607"/>
<dbReference type="PATRIC" id="fig|224324.8.peg.494"/>
<dbReference type="eggNOG" id="COG1207">
    <property type="taxonomic scope" value="Bacteria"/>
</dbReference>
<dbReference type="HOGENOM" id="CLU_029499_15_2_0"/>
<dbReference type="InParanoid" id="O66863"/>
<dbReference type="OrthoDB" id="9775031at2"/>
<dbReference type="UniPathway" id="UPA00113">
    <property type="reaction ID" value="UER00532"/>
</dbReference>
<dbReference type="UniPathway" id="UPA00113">
    <property type="reaction ID" value="UER00533"/>
</dbReference>
<dbReference type="UniPathway" id="UPA00973"/>
<dbReference type="Proteomes" id="UP000000798">
    <property type="component" value="Chromosome"/>
</dbReference>
<dbReference type="GO" id="GO:0005737">
    <property type="term" value="C:cytoplasm"/>
    <property type="evidence" value="ECO:0007669"/>
    <property type="project" value="UniProtKB-SubCell"/>
</dbReference>
<dbReference type="GO" id="GO:0016020">
    <property type="term" value="C:membrane"/>
    <property type="evidence" value="ECO:0007669"/>
    <property type="project" value="GOC"/>
</dbReference>
<dbReference type="GO" id="GO:0019134">
    <property type="term" value="F:glucosamine-1-phosphate N-acetyltransferase activity"/>
    <property type="evidence" value="ECO:0007669"/>
    <property type="project" value="UniProtKB-UniRule"/>
</dbReference>
<dbReference type="GO" id="GO:0000287">
    <property type="term" value="F:magnesium ion binding"/>
    <property type="evidence" value="ECO:0007669"/>
    <property type="project" value="UniProtKB-UniRule"/>
</dbReference>
<dbReference type="GO" id="GO:0003977">
    <property type="term" value="F:UDP-N-acetylglucosamine diphosphorylase activity"/>
    <property type="evidence" value="ECO:0007669"/>
    <property type="project" value="UniProtKB-UniRule"/>
</dbReference>
<dbReference type="GO" id="GO:0000902">
    <property type="term" value="P:cell morphogenesis"/>
    <property type="evidence" value="ECO:0007669"/>
    <property type="project" value="UniProtKB-UniRule"/>
</dbReference>
<dbReference type="GO" id="GO:0071555">
    <property type="term" value="P:cell wall organization"/>
    <property type="evidence" value="ECO:0007669"/>
    <property type="project" value="UniProtKB-KW"/>
</dbReference>
<dbReference type="GO" id="GO:0009245">
    <property type="term" value="P:lipid A biosynthetic process"/>
    <property type="evidence" value="ECO:0007669"/>
    <property type="project" value="UniProtKB-UniRule"/>
</dbReference>
<dbReference type="GO" id="GO:0009252">
    <property type="term" value="P:peptidoglycan biosynthetic process"/>
    <property type="evidence" value="ECO:0007669"/>
    <property type="project" value="UniProtKB-UniRule"/>
</dbReference>
<dbReference type="GO" id="GO:0008360">
    <property type="term" value="P:regulation of cell shape"/>
    <property type="evidence" value="ECO:0007669"/>
    <property type="project" value="UniProtKB-KW"/>
</dbReference>
<dbReference type="GO" id="GO:0006048">
    <property type="term" value="P:UDP-N-acetylglucosamine biosynthetic process"/>
    <property type="evidence" value="ECO:0007669"/>
    <property type="project" value="UniProtKB-UniPathway"/>
</dbReference>
<dbReference type="CDD" id="cd02540">
    <property type="entry name" value="GT2_GlmU_N_bac"/>
    <property type="match status" value="1"/>
</dbReference>
<dbReference type="CDD" id="cd03353">
    <property type="entry name" value="LbH_GlmU_C"/>
    <property type="match status" value="1"/>
</dbReference>
<dbReference type="Gene3D" id="2.160.10.10">
    <property type="entry name" value="Hexapeptide repeat proteins"/>
    <property type="match status" value="1"/>
</dbReference>
<dbReference type="Gene3D" id="3.90.550.10">
    <property type="entry name" value="Spore Coat Polysaccharide Biosynthesis Protein SpsA, Chain A"/>
    <property type="match status" value="1"/>
</dbReference>
<dbReference type="HAMAP" id="MF_01631">
    <property type="entry name" value="GlmU"/>
    <property type="match status" value="1"/>
</dbReference>
<dbReference type="InterPro" id="IPR005882">
    <property type="entry name" value="Bifunctional_GlmU"/>
</dbReference>
<dbReference type="InterPro" id="IPR050065">
    <property type="entry name" value="GlmU-like"/>
</dbReference>
<dbReference type="InterPro" id="IPR038009">
    <property type="entry name" value="GlmU_C_LbH"/>
</dbReference>
<dbReference type="InterPro" id="IPR018357">
    <property type="entry name" value="Hexapep_transf_CS"/>
</dbReference>
<dbReference type="InterPro" id="IPR005835">
    <property type="entry name" value="NTP_transferase_dom"/>
</dbReference>
<dbReference type="InterPro" id="IPR029044">
    <property type="entry name" value="Nucleotide-diphossugar_trans"/>
</dbReference>
<dbReference type="InterPro" id="IPR011004">
    <property type="entry name" value="Trimer_LpxA-like_sf"/>
</dbReference>
<dbReference type="NCBIfam" id="TIGR01173">
    <property type="entry name" value="glmU"/>
    <property type="match status" value="1"/>
</dbReference>
<dbReference type="PANTHER" id="PTHR43584:SF3">
    <property type="entry name" value="BIFUNCTIONAL PROTEIN GLMU"/>
    <property type="match status" value="1"/>
</dbReference>
<dbReference type="PANTHER" id="PTHR43584">
    <property type="entry name" value="NUCLEOTIDYL TRANSFERASE"/>
    <property type="match status" value="1"/>
</dbReference>
<dbReference type="Pfam" id="PF00483">
    <property type="entry name" value="NTP_transferase"/>
    <property type="match status" value="1"/>
</dbReference>
<dbReference type="SUPFAM" id="SSF53448">
    <property type="entry name" value="Nucleotide-diphospho-sugar transferases"/>
    <property type="match status" value="1"/>
</dbReference>
<dbReference type="SUPFAM" id="SSF51161">
    <property type="entry name" value="Trimeric LpxA-like enzymes"/>
    <property type="match status" value="1"/>
</dbReference>
<dbReference type="PROSITE" id="PS00101">
    <property type="entry name" value="HEXAPEP_TRANSFERASES"/>
    <property type="match status" value="1"/>
</dbReference>
<sequence>MRAVILAAGLGTRFKSEKPKVLHEILGKPMLWYVITNVRNGRIDDIAVVVGHKAQEVMEAFKNENLKFFIQENPKGGTADAVLAAKDFFSSYEGYVLIINGDSPLVSGETIRNMQQFIHMVRTYEGIKLGGVVLTTHLPDPTGYGRIIKEEGTDRIIRIVEEKDATPEEKAITEINAGTYIFYAPYLLEALYRIKPSPVTGELYLTDVIEYMVNKGYEVRSFMAKEPTEALGVNTRWDLALVENVIKLKIARYWAERGVTVHYPETVWIEPDVSIEPDVEIFPDVMLKGKTKIKKGSVIGKGSVIKDSLVEENVIVREYSVIENSEIKKRAVVGPFARIRNESVIGEEAEIGNFVEVKKSSIGKGVKAKHLAYIGDATVGENTNIGAGTVFANYDGKRKYESYVGKSAFIGSNSLLIAPIRVGDWAYIAGGSVVNKDIPEGALAVSRPELKIFEGRGKKKLQKD</sequence>
<organism>
    <name type="scientific">Aquifex aeolicus (strain VF5)</name>
    <dbReference type="NCBI Taxonomy" id="224324"/>
    <lineage>
        <taxon>Bacteria</taxon>
        <taxon>Pseudomonadati</taxon>
        <taxon>Aquificota</taxon>
        <taxon>Aquificia</taxon>
        <taxon>Aquificales</taxon>
        <taxon>Aquificaceae</taxon>
        <taxon>Aquifex</taxon>
    </lineage>
</organism>
<accession>O66863</accession>
<gene>
    <name evidence="1" type="primary">glmU</name>
    <name type="ordered locus">aq_607</name>
</gene>
<proteinExistence type="inferred from homology"/>
<keyword id="KW-0012">Acyltransferase</keyword>
<keyword id="KW-0133">Cell shape</keyword>
<keyword id="KW-0961">Cell wall biogenesis/degradation</keyword>
<keyword id="KW-0963">Cytoplasm</keyword>
<keyword id="KW-0460">Magnesium</keyword>
<keyword id="KW-0479">Metal-binding</keyword>
<keyword id="KW-0511">Multifunctional enzyme</keyword>
<keyword id="KW-0548">Nucleotidyltransferase</keyword>
<keyword id="KW-0573">Peptidoglycan synthesis</keyword>
<keyword id="KW-1185">Reference proteome</keyword>
<keyword id="KW-0677">Repeat</keyword>
<keyword id="KW-0808">Transferase</keyword>
<protein>
    <recommendedName>
        <fullName evidence="1">Bifunctional protein GlmU</fullName>
    </recommendedName>
    <domain>
        <recommendedName>
            <fullName evidence="1">UDP-N-acetylglucosamine pyrophosphorylase</fullName>
            <ecNumber evidence="1">2.7.7.23</ecNumber>
        </recommendedName>
        <alternativeName>
            <fullName evidence="1">N-acetylglucosamine-1-phosphate uridyltransferase</fullName>
        </alternativeName>
    </domain>
    <domain>
        <recommendedName>
            <fullName evidence="1">Glucosamine-1-phosphate N-acetyltransferase</fullName>
            <ecNumber evidence="1">2.3.1.157</ecNumber>
        </recommendedName>
    </domain>
</protein>
<comment type="function">
    <text evidence="1">Catalyzes the last two sequential reactions in the de novo biosynthetic pathway for UDP-N-acetylglucosamine (UDP-GlcNAc). The C-terminal domain catalyzes the transfer of acetyl group from acetyl coenzyme A to glucosamine-1-phosphate (GlcN-1-P) to produce N-acetylglucosamine-1-phosphate (GlcNAc-1-P), which is converted into UDP-GlcNAc by the transfer of uridine 5-monophosphate (from uridine 5-triphosphate), a reaction catalyzed by the N-terminal domain.</text>
</comment>
<comment type="catalytic activity">
    <reaction evidence="1">
        <text>alpha-D-glucosamine 1-phosphate + acetyl-CoA = N-acetyl-alpha-D-glucosamine 1-phosphate + CoA + H(+)</text>
        <dbReference type="Rhea" id="RHEA:13725"/>
        <dbReference type="ChEBI" id="CHEBI:15378"/>
        <dbReference type="ChEBI" id="CHEBI:57287"/>
        <dbReference type="ChEBI" id="CHEBI:57288"/>
        <dbReference type="ChEBI" id="CHEBI:57776"/>
        <dbReference type="ChEBI" id="CHEBI:58516"/>
        <dbReference type="EC" id="2.3.1.157"/>
    </reaction>
</comment>
<comment type="catalytic activity">
    <reaction evidence="1">
        <text>N-acetyl-alpha-D-glucosamine 1-phosphate + UTP + H(+) = UDP-N-acetyl-alpha-D-glucosamine + diphosphate</text>
        <dbReference type="Rhea" id="RHEA:13509"/>
        <dbReference type="ChEBI" id="CHEBI:15378"/>
        <dbReference type="ChEBI" id="CHEBI:33019"/>
        <dbReference type="ChEBI" id="CHEBI:46398"/>
        <dbReference type="ChEBI" id="CHEBI:57705"/>
        <dbReference type="ChEBI" id="CHEBI:57776"/>
        <dbReference type="EC" id="2.7.7.23"/>
    </reaction>
</comment>
<comment type="cofactor">
    <cofactor evidence="1">
        <name>Mg(2+)</name>
        <dbReference type="ChEBI" id="CHEBI:18420"/>
    </cofactor>
    <text evidence="1">Binds 1 Mg(2+) ion per subunit.</text>
</comment>
<comment type="pathway">
    <text evidence="1">Nucleotide-sugar biosynthesis; UDP-N-acetyl-alpha-D-glucosamine biosynthesis; N-acetyl-alpha-D-glucosamine 1-phosphate from alpha-D-glucosamine 6-phosphate (route II): step 2/2.</text>
</comment>
<comment type="pathway">
    <text evidence="1">Nucleotide-sugar biosynthesis; UDP-N-acetyl-alpha-D-glucosamine biosynthesis; UDP-N-acetyl-alpha-D-glucosamine from N-acetyl-alpha-D-glucosamine 1-phosphate: step 1/1.</text>
</comment>
<comment type="pathway">
    <text evidence="1">Bacterial outer membrane biogenesis; LPS lipid A biosynthesis.</text>
</comment>
<comment type="subunit">
    <text evidence="1">Homotrimer.</text>
</comment>
<comment type="subcellular location">
    <subcellularLocation>
        <location evidence="1">Cytoplasm</location>
    </subcellularLocation>
</comment>
<comment type="similarity">
    <text evidence="1">In the N-terminal section; belongs to the N-acetylglucosamine-1-phosphate uridyltransferase family.</text>
</comment>
<comment type="similarity">
    <text evidence="1">In the C-terminal section; belongs to the transferase hexapeptide repeat family.</text>
</comment>
<feature type="chain" id="PRO_0000233724" description="Bifunctional protein GlmU">
    <location>
        <begin position="1"/>
        <end position="464"/>
    </location>
</feature>
<feature type="region of interest" description="Pyrophosphorylase" evidence="1">
    <location>
        <begin position="1"/>
        <end position="236"/>
    </location>
</feature>
<feature type="region of interest" description="Linker" evidence="1">
    <location>
        <begin position="237"/>
        <end position="257"/>
    </location>
</feature>
<feature type="region of interest" description="N-acetyltransferase" evidence="1">
    <location>
        <begin position="258"/>
        <end position="464"/>
    </location>
</feature>
<feature type="active site" description="Proton acceptor" evidence="1">
    <location>
        <position position="370"/>
    </location>
</feature>
<feature type="binding site" evidence="1">
    <location>
        <begin position="6"/>
        <end position="9"/>
    </location>
    <ligand>
        <name>UDP-N-acetyl-alpha-D-glucosamine</name>
        <dbReference type="ChEBI" id="CHEBI:57705"/>
    </ligand>
</feature>
<feature type="binding site" evidence="1">
    <location>
        <position position="20"/>
    </location>
    <ligand>
        <name>UDP-N-acetyl-alpha-D-glucosamine</name>
        <dbReference type="ChEBI" id="CHEBI:57705"/>
    </ligand>
</feature>
<feature type="binding site" evidence="1">
    <location>
        <begin position="77"/>
        <end position="78"/>
    </location>
    <ligand>
        <name>UDP-N-acetyl-alpha-D-glucosamine</name>
        <dbReference type="ChEBI" id="CHEBI:57705"/>
    </ligand>
</feature>
<feature type="binding site" evidence="1">
    <location>
        <position position="102"/>
    </location>
    <ligand>
        <name>Mg(2+)</name>
        <dbReference type="ChEBI" id="CHEBI:18420"/>
    </ligand>
</feature>
<feature type="binding site" evidence="1">
    <location>
        <position position="145"/>
    </location>
    <ligand>
        <name>UDP-N-acetyl-alpha-D-glucosamine</name>
        <dbReference type="ChEBI" id="CHEBI:57705"/>
    </ligand>
</feature>
<feature type="binding site" evidence="1">
    <location>
        <position position="161"/>
    </location>
    <ligand>
        <name>UDP-N-acetyl-alpha-D-glucosamine</name>
        <dbReference type="ChEBI" id="CHEBI:57705"/>
    </ligand>
</feature>
<feature type="binding site" evidence="1">
    <location>
        <position position="176"/>
    </location>
    <ligand>
        <name>UDP-N-acetyl-alpha-D-glucosamine</name>
        <dbReference type="ChEBI" id="CHEBI:57705"/>
    </ligand>
</feature>
<feature type="binding site" evidence="1">
    <location>
        <position position="234"/>
    </location>
    <ligand>
        <name>Mg(2+)</name>
        <dbReference type="ChEBI" id="CHEBI:18420"/>
    </ligand>
</feature>
<feature type="binding site" evidence="1">
    <location>
        <position position="234"/>
    </location>
    <ligand>
        <name>UDP-N-acetyl-alpha-D-glucosamine</name>
        <dbReference type="ChEBI" id="CHEBI:57705"/>
    </ligand>
</feature>
<feature type="binding site" evidence="1">
    <location>
        <position position="340"/>
    </location>
    <ligand>
        <name>UDP-N-acetyl-alpha-D-glucosamine</name>
        <dbReference type="ChEBI" id="CHEBI:57705"/>
    </ligand>
</feature>
<feature type="binding site" evidence="1">
    <location>
        <position position="358"/>
    </location>
    <ligand>
        <name>UDP-N-acetyl-alpha-D-glucosamine</name>
        <dbReference type="ChEBI" id="CHEBI:57705"/>
    </ligand>
</feature>
<feature type="binding site" evidence="1">
    <location>
        <position position="373"/>
    </location>
    <ligand>
        <name>UDP-N-acetyl-alpha-D-glucosamine</name>
        <dbReference type="ChEBI" id="CHEBI:57705"/>
    </ligand>
</feature>
<feature type="binding site" evidence="1">
    <location>
        <position position="384"/>
    </location>
    <ligand>
        <name>UDP-N-acetyl-alpha-D-glucosamine</name>
        <dbReference type="ChEBI" id="CHEBI:57705"/>
    </ligand>
</feature>
<feature type="binding site" evidence="1">
    <location>
        <position position="387"/>
    </location>
    <ligand>
        <name>acetyl-CoA</name>
        <dbReference type="ChEBI" id="CHEBI:57288"/>
    </ligand>
</feature>
<feature type="binding site" evidence="1">
    <location>
        <begin position="393"/>
        <end position="394"/>
    </location>
    <ligand>
        <name>acetyl-CoA</name>
        <dbReference type="ChEBI" id="CHEBI:57288"/>
    </ligand>
</feature>
<feature type="binding site" evidence="1">
    <location>
        <position position="412"/>
    </location>
    <ligand>
        <name>acetyl-CoA</name>
        <dbReference type="ChEBI" id="CHEBI:57288"/>
    </ligand>
</feature>
<feature type="binding site" evidence="1">
    <location>
        <position position="430"/>
    </location>
    <ligand>
        <name>acetyl-CoA</name>
        <dbReference type="ChEBI" id="CHEBI:57288"/>
    </ligand>
</feature>
<feature type="binding site" evidence="1">
    <location>
        <position position="447"/>
    </location>
    <ligand>
        <name>acetyl-CoA</name>
        <dbReference type="ChEBI" id="CHEBI:57288"/>
    </ligand>
</feature>
<name>GLMU_AQUAE</name>
<evidence type="ECO:0000255" key="1">
    <source>
        <dbReference type="HAMAP-Rule" id="MF_01631"/>
    </source>
</evidence>
<reference key="1">
    <citation type="journal article" date="1998" name="Nature">
        <title>The complete genome of the hyperthermophilic bacterium Aquifex aeolicus.</title>
        <authorList>
            <person name="Deckert G."/>
            <person name="Warren P.V."/>
            <person name="Gaasterland T."/>
            <person name="Young W.G."/>
            <person name="Lenox A.L."/>
            <person name="Graham D.E."/>
            <person name="Overbeek R."/>
            <person name="Snead M.A."/>
            <person name="Keller M."/>
            <person name="Aujay M."/>
            <person name="Huber R."/>
            <person name="Feldman R.A."/>
            <person name="Short J.M."/>
            <person name="Olsen G.J."/>
            <person name="Swanson R.V."/>
        </authorList>
    </citation>
    <scope>NUCLEOTIDE SEQUENCE [LARGE SCALE GENOMIC DNA]</scope>
    <source>
        <strain>VF5</strain>
    </source>
</reference>